<dbReference type="EC" id="2.7.7.18" evidence="1"/>
<dbReference type="EMBL" id="CP001191">
    <property type="protein sequence ID" value="ACI57139.1"/>
    <property type="molecule type" value="Genomic_DNA"/>
</dbReference>
<dbReference type="SMR" id="B5ZUE6"/>
<dbReference type="STRING" id="395492.Rleg2_3877"/>
<dbReference type="KEGG" id="rlt:Rleg2_3877"/>
<dbReference type="eggNOG" id="COG1057">
    <property type="taxonomic scope" value="Bacteria"/>
</dbReference>
<dbReference type="HOGENOM" id="CLU_069765_2_0_5"/>
<dbReference type="UniPathway" id="UPA00253">
    <property type="reaction ID" value="UER00332"/>
</dbReference>
<dbReference type="Proteomes" id="UP000008330">
    <property type="component" value="Chromosome"/>
</dbReference>
<dbReference type="GO" id="GO:0005524">
    <property type="term" value="F:ATP binding"/>
    <property type="evidence" value="ECO:0007669"/>
    <property type="project" value="UniProtKB-KW"/>
</dbReference>
<dbReference type="GO" id="GO:0004515">
    <property type="term" value="F:nicotinate-nucleotide adenylyltransferase activity"/>
    <property type="evidence" value="ECO:0007669"/>
    <property type="project" value="UniProtKB-UniRule"/>
</dbReference>
<dbReference type="GO" id="GO:0009435">
    <property type="term" value="P:NAD biosynthetic process"/>
    <property type="evidence" value="ECO:0007669"/>
    <property type="project" value="UniProtKB-UniRule"/>
</dbReference>
<dbReference type="CDD" id="cd02165">
    <property type="entry name" value="NMNAT"/>
    <property type="match status" value="1"/>
</dbReference>
<dbReference type="Gene3D" id="3.40.50.620">
    <property type="entry name" value="HUPs"/>
    <property type="match status" value="1"/>
</dbReference>
<dbReference type="HAMAP" id="MF_00244">
    <property type="entry name" value="NaMN_adenylyltr"/>
    <property type="match status" value="1"/>
</dbReference>
<dbReference type="InterPro" id="IPR004821">
    <property type="entry name" value="Cyt_trans-like"/>
</dbReference>
<dbReference type="InterPro" id="IPR005248">
    <property type="entry name" value="NadD/NMNAT"/>
</dbReference>
<dbReference type="InterPro" id="IPR014729">
    <property type="entry name" value="Rossmann-like_a/b/a_fold"/>
</dbReference>
<dbReference type="NCBIfam" id="TIGR00482">
    <property type="entry name" value="nicotinate (nicotinamide) nucleotide adenylyltransferase"/>
    <property type="match status" value="1"/>
</dbReference>
<dbReference type="NCBIfam" id="NF000843">
    <property type="entry name" value="PRK00071.2-2"/>
    <property type="match status" value="1"/>
</dbReference>
<dbReference type="NCBIfam" id="NF000845">
    <property type="entry name" value="PRK00071.2-4"/>
    <property type="match status" value="1"/>
</dbReference>
<dbReference type="PANTHER" id="PTHR39321">
    <property type="entry name" value="NICOTINATE-NUCLEOTIDE ADENYLYLTRANSFERASE-RELATED"/>
    <property type="match status" value="1"/>
</dbReference>
<dbReference type="PANTHER" id="PTHR39321:SF3">
    <property type="entry name" value="PHOSPHOPANTETHEINE ADENYLYLTRANSFERASE"/>
    <property type="match status" value="1"/>
</dbReference>
<dbReference type="Pfam" id="PF01467">
    <property type="entry name" value="CTP_transf_like"/>
    <property type="match status" value="1"/>
</dbReference>
<dbReference type="SUPFAM" id="SSF52374">
    <property type="entry name" value="Nucleotidylyl transferase"/>
    <property type="match status" value="1"/>
</dbReference>
<name>NADD_RHILW</name>
<evidence type="ECO:0000255" key="1">
    <source>
        <dbReference type="HAMAP-Rule" id="MF_00244"/>
    </source>
</evidence>
<protein>
    <recommendedName>
        <fullName evidence="1">Probable nicotinate-nucleotide adenylyltransferase</fullName>
        <ecNumber evidence="1">2.7.7.18</ecNumber>
    </recommendedName>
    <alternativeName>
        <fullName evidence="1">Deamido-NAD(+) diphosphorylase</fullName>
    </alternativeName>
    <alternativeName>
        <fullName evidence="1">Deamido-NAD(+) pyrophosphorylase</fullName>
    </alternativeName>
    <alternativeName>
        <fullName evidence="1">Nicotinate mononucleotide adenylyltransferase</fullName>
        <shortName evidence="1">NaMN adenylyltransferase</shortName>
    </alternativeName>
</protein>
<keyword id="KW-0067">ATP-binding</keyword>
<keyword id="KW-0520">NAD</keyword>
<keyword id="KW-0547">Nucleotide-binding</keyword>
<keyword id="KW-0548">Nucleotidyltransferase</keyword>
<keyword id="KW-0662">Pyridine nucleotide biosynthesis</keyword>
<keyword id="KW-1185">Reference proteome</keyword>
<keyword id="KW-0808">Transferase</keyword>
<feature type="chain" id="PRO_1000125358" description="Probable nicotinate-nucleotide adenylyltransferase">
    <location>
        <begin position="1"/>
        <end position="192"/>
    </location>
</feature>
<proteinExistence type="inferred from homology"/>
<organism>
    <name type="scientific">Rhizobium leguminosarum bv. trifolii (strain WSM2304)</name>
    <dbReference type="NCBI Taxonomy" id="395492"/>
    <lineage>
        <taxon>Bacteria</taxon>
        <taxon>Pseudomonadati</taxon>
        <taxon>Pseudomonadota</taxon>
        <taxon>Alphaproteobacteria</taxon>
        <taxon>Hyphomicrobiales</taxon>
        <taxon>Rhizobiaceae</taxon>
        <taxon>Rhizobium/Agrobacterium group</taxon>
        <taxon>Rhizobium</taxon>
    </lineage>
</organism>
<accession>B5ZUE6</accession>
<sequence length="192" mass="21456">MVVGLFGGSFNPPHQGHALVAEIAIKRLGLDQLWWMVTPGNPLKSRNQLAPLAERIAESERVAADPRVKVTAFEQSLGVSYTANTLAWVKARNPHVHFIWIMGADGLQTFHKWQKWQEIVRTFPIAVIDRPGATLSYLSSKMTRTFDFARVDEDDARILWKKPAPAWTFIHGPRSGLSSTAIRNGSVPDDSE</sequence>
<comment type="function">
    <text evidence="1">Catalyzes the reversible adenylation of nicotinate mononucleotide (NaMN) to nicotinic acid adenine dinucleotide (NaAD).</text>
</comment>
<comment type="catalytic activity">
    <reaction evidence="1">
        <text>nicotinate beta-D-ribonucleotide + ATP + H(+) = deamido-NAD(+) + diphosphate</text>
        <dbReference type="Rhea" id="RHEA:22860"/>
        <dbReference type="ChEBI" id="CHEBI:15378"/>
        <dbReference type="ChEBI" id="CHEBI:30616"/>
        <dbReference type="ChEBI" id="CHEBI:33019"/>
        <dbReference type="ChEBI" id="CHEBI:57502"/>
        <dbReference type="ChEBI" id="CHEBI:58437"/>
        <dbReference type="EC" id="2.7.7.18"/>
    </reaction>
</comment>
<comment type="pathway">
    <text evidence="1">Cofactor biosynthesis; NAD(+) biosynthesis; deamido-NAD(+) from nicotinate D-ribonucleotide: step 1/1.</text>
</comment>
<comment type="similarity">
    <text evidence="1">Belongs to the NadD family.</text>
</comment>
<gene>
    <name evidence="1" type="primary">nadD</name>
    <name type="ordered locus">Rleg2_3877</name>
</gene>
<reference key="1">
    <citation type="journal article" date="2010" name="Stand. Genomic Sci.">
        <title>Complete genome sequence of Rhizobium leguminosarum bv trifolii strain WSM2304, an effective microsymbiont of the South American clover Trifolium polymorphum.</title>
        <authorList>
            <person name="Reeve W."/>
            <person name="O'Hara G."/>
            <person name="Chain P."/>
            <person name="Ardley J."/>
            <person name="Brau L."/>
            <person name="Nandesena K."/>
            <person name="Tiwari R."/>
            <person name="Malfatti S."/>
            <person name="Kiss H."/>
            <person name="Lapidus A."/>
            <person name="Copeland A."/>
            <person name="Nolan M."/>
            <person name="Land M."/>
            <person name="Ivanova N."/>
            <person name="Mavromatis K."/>
            <person name="Markowitz V."/>
            <person name="Kyrpides N."/>
            <person name="Melino V."/>
            <person name="Denton M."/>
            <person name="Yates R."/>
            <person name="Howieson J."/>
        </authorList>
    </citation>
    <scope>NUCLEOTIDE SEQUENCE [LARGE SCALE GENOMIC DNA]</scope>
    <source>
        <strain>WSM2304</strain>
    </source>
</reference>